<gene>
    <name evidence="1" type="primary">rplE</name>
    <name evidence="1" type="synonym">rpl5</name>
    <name type="ordered locus">MAE_57310</name>
</gene>
<name>RL5_MICAN</name>
<comment type="function">
    <text evidence="1">This is one of the proteins that bind and probably mediate the attachment of the 5S RNA into the large ribosomal subunit, where it forms part of the central protuberance. In the 70S ribosome it contacts protein S13 of the 30S subunit (bridge B1b), connecting the 2 subunits; this bridge is implicated in subunit movement. Contacts the P site tRNA; the 5S rRNA and some of its associated proteins might help stabilize positioning of ribosome-bound tRNAs.</text>
</comment>
<comment type="subunit">
    <text evidence="1">Part of the 50S ribosomal subunit; part of the 5S rRNA/L5/L18/L25 subcomplex. Contacts the 5S rRNA and the P site tRNA. Forms a bridge to the 30S subunit in the 70S ribosome.</text>
</comment>
<comment type="similarity">
    <text evidence="1">Belongs to the universal ribosomal protein uL5 family.</text>
</comment>
<feature type="chain" id="PRO_1000086598" description="Large ribosomal subunit protein uL5">
    <location>
        <begin position="1"/>
        <end position="179"/>
    </location>
</feature>
<dbReference type="EMBL" id="AP009552">
    <property type="protein sequence ID" value="BAG05553.1"/>
    <property type="molecule type" value="Genomic_DNA"/>
</dbReference>
<dbReference type="RefSeq" id="WP_002787866.1">
    <property type="nucleotide sequence ID" value="NC_010296.1"/>
</dbReference>
<dbReference type="SMR" id="B0JHZ1"/>
<dbReference type="STRING" id="449447.MAE_57310"/>
<dbReference type="PaxDb" id="449447-MAE_57310"/>
<dbReference type="EnsemblBacteria" id="BAG05553">
    <property type="protein sequence ID" value="BAG05553"/>
    <property type="gene ID" value="MAE_57310"/>
</dbReference>
<dbReference type="KEGG" id="mar:MAE_57310"/>
<dbReference type="eggNOG" id="COG0094">
    <property type="taxonomic scope" value="Bacteria"/>
</dbReference>
<dbReference type="HOGENOM" id="CLU_061015_2_1_3"/>
<dbReference type="BioCyc" id="MAER449447:MAE_RS24970-MONOMER"/>
<dbReference type="Proteomes" id="UP000001510">
    <property type="component" value="Chromosome"/>
</dbReference>
<dbReference type="GO" id="GO:1990904">
    <property type="term" value="C:ribonucleoprotein complex"/>
    <property type="evidence" value="ECO:0007669"/>
    <property type="project" value="UniProtKB-KW"/>
</dbReference>
<dbReference type="GO" id="GO:0005840">
    <property type="term" value="C:ribosome"/>
    <property type="evidence" value="ECO:0007669"/>
    <property type="project" value="UniProtKB-KW"/>
</dbReference>
<dbReference type="GO" id="GO:0019843">
    <property type="term" value="F:rRNA binding"/>
    <property type="evidence" value="ECO:0007669"/>
    <property type="project" value="UniProtKB-UniRule"/>
</dbReference>
<dbReference type="GO" id="GO:0003735">
    <property type="term" value="F:structural constituent of ribosome"/>
    <property type="evidence" value="ECO:0007669"/>
    <property type="project" value="InterPro"/>
</dbReference>
<dbReference type="GO" id="GO:0000049">
    <property type="term" value="F:tRNA binding"/>
    <property type="evidence" value="ECO:0007669"/>
    <property type="project" value="UniProtKB-UniRule"/>
</dbReference>
<dbReference type="GO" id="GO:0006412">
    <property type="term" value="P:translation"/>
    <property type="evidence" value="ECO:0007669"/>
    <property type="project" value="UniProtKB-UniRule"/>
</dbReference>
<dbReference type="FunFam" id="3.30.1440.10:FF:000001">
    <property type="entry name" value="50S ribosomal protein L5"/>
    <property type="match status" value="1"/>
</dbReference>
<dbReference type="Gene3D" id="3.30.1440.10">
    <property type="match status" value="1"/>
</dbReference>
<dbReference type="HAMAP" id="MF_01333_B">
    <property type="entry name" value="Ribosomal_uL5_B"/>
    <property type="match status" value="1"/>
</dbReference>
<dbReference type="InterPro" id="IPR002132">
    <property type="entry name" value="Ribosomal_uL5"/>
</dbReference>
<dbReference type="InterPro" id="IPR020930">
    <property type="entry name" value="Ribosomal_uL5_bac-type"/>
</dbReference>
<dbReference type="InterPro" id="IPR031309">
    <property type="entry name" value="Ribosomal_uL5_C"/>
</dbReference>
<dbReference type="InterPro" id="IPR020929">
    <property type="entry name" value="Ribosomal_uL5_CS"/>
</dbReference>
<dbReference type="InterPro" id="IPR022803">
    <property type="entry name" value="Ribosomal_uL5_dom_sf"/>
</dbReference>
<dbReference type="InterPro" id="IPR031310">
    <property type="entry name" value="Ribosomal_uL5_N"/>
</dbReference>
<dbReference type="NCBIfam" id="NF000585">
    <property type="entry name" value="PRK00010.1"/>
    <property type="match status" value="1"/>
</dbReference>
<dbReference type="PANTHER" id="PTHR11994">
    <property type="entry name" value="60S RIBOSOMAL PROTEIN L11-RELATED"/>
    <property type="match status" value="1"/>
</dbReference>
<dbReference type="Pfam" id="PF00281">
    <property type="entry name" value="Ribosomal_L5"/>
    <property type="match status" value="1"/>
</dbReference>
<dbReference type="Pfam" id="PF00673">
    <property type="entry name" value="Ribosomal_L5_C"/>
    <property type="match status" value="1"/>
</dbReference>
<dbReference type="PIRSF" id="PIRSF002161">
    <property type="entry name" value="Ribosomal_L5"/>
    <property type="match status" value="1"/>
</dbReference>
<dbReference type="SUPFAM" id="SSF55282">
    <property type="entry name" value="RL5-like"/>
    <property type="match status" value="1"/>
</dbReference>
<dbReference type="PROSITE" id="PS00358">
    <property type="entry name" value="RIBOSOMAL_L5"/>
    <property type="match status" value="1"/>
</dbReference>
<accession>B0JHZ1</accession>
<evidence type="ECO:0000255" key="1">
    <source>
        <dbReference type="HAMAP-Rule" id="MF_01333"/>
    </source>
</evidence>
<evidence type="ECO:0000305" key="2"/>
<sequence length="179" mass="20106">MSQKLKTTYQETIVPKLKEQFGYTNIHQVPKVIKITVNRGLGEASQNAKALESSKAELSTITGQQPVVTRAKKAIAGFKIREGMPVGVMVTLRGDRMYAFLDRLINLALPRIRDFRGISGNSFDGRGNYSLGIREQLIFPEIEYDKIDQIRGMDISIITTAKNDEEGRALLKEMGMPFR</sequence>
<proteinExistence type="inferred from homology"/>
<protein>
    <recommendedName>
        <fullName evidence="1">Large ribosomal subunit protein uL5</fullName>
    </recommendedName>
    <alternativeName>
        <fullName evidence="2">50S ribosomal protein L5</fullName>
    </alternativeName>
</protein>
<keyword id="KW-0687">Ribonucleoprotein</keyword>
<keyword id="KW-0689">Ribosomal protein</keyword>
<keyword id="KW-0694">RNA-binding</keyword>
<keyword id="KW-0699">rRNA-binding</keyword>
<keyword id="KW-0820">tRNA-binding</keyword>
<reference key="1">
    <citation type="journal article" date="2007" name="DNA Res.">
        <title>Complete genomic structure of the bloom-forming toxic cyanobacterium Microcystis aeruginosa NIES-843.</title>
        <authorList>
            <person name="Kaneko T."/>
            <person name="Nakajima N."/>
            <person name="Okamoto S."/>
            <person name="Suzuki I."/>
            <person name="Tanabe Y."/>
            <person name="Tamaoki M."/>
            <person name="Nakamura Y."/>
            <person name="Kasai F."/>
            <person name="Watanabe A."/>
            <person name="Kawashima K."/>
            <person name="Kishida Y."/>
            <person name="Ono A."/>
            <person name="Shimizu Y."/>
            <person name="Takahashi C."/>
            <person name="Minami C."/>
            <person name="Fujishiro T."/>
            <person name="Kohara M."/>
            <person name="Katoh M."/>
            <person name="Nakazaki N."/>
            <person name="Nakayama S."/>
            <person name="Yamada M."/>
            <person name="Tabata S."/>
            <person name="Watanabe M.M."/>
        </authorList>
    </citation>
    <scope>NUCLEOTIDE SEQUENCE [LARGE SCALE GENOMIC DNA]</scope>
    <source>
        <strain>NIES-843 / IAM M-247</strain>
    </source>
</reference>
<organism>
    <name type="scientific">Microcystis aeruginosa (strain NIES-843 / IAM M-2473)</name>
    <dbReference type="NCBI Taxonomy" id="449447"/>
    <lineage>
        <taxon>Bacteria</taxon>
        <taxon>Bacillati</taxon>
        <taxon>Cyanobacteriota</taxon>
        <taxon>Cyanophyceae</taxon>
        <taxon>Oscillatoriophycideae</taxon>
        <taxon>Chroococcales</taxon>
        <taxon>Microcystaceae</taxon>
        <taxon>Microcystis</taxon>
    </lineage>
</organism>